<accession>A4SGV1</accession>
<dbReference type="EC" id="2.3.1.275" evidence="1"/>
<dbReference type="EMBL" id="CP000607">
    <property type="protein sequence ID" value="ABP37710.1"/>
    <property type="molecule type" value="Genomic_DNA"/>
</dbReference>
<dbReference type="SMR" id="A4SGV1"/>
<dbReference type="STRING" id="290318.Cvib_1700"/>
<dbReference type="KEGG" id="pvi:Cvib_1700"/>
<dbReference type="eggNOG" id="COG0344">
    <property type="taxonomic scope" value="Bacteria"/>
</dbReference>
<dbReference type="HOGENOM" id="CLU_081254_3_0_10"/>
<dbReference type="OrthoDB" id="9777124at2"/>
<dbReference type="UniPathway" id="UPA00085"/>
<dbReference type="GO" id="GO:0005886">
    <property type="term" value="C:plasma membrane"/>
    <property type="evidence" value="ECO:0007669"/>
    <property type="project" value="UniProtKB-SubCell"/>
</dbReference>
<dbReference type="GO" id="GO:0043772">
    <property type="term" value="F:acyl-phosphate glycerol-3-phosphate acyltransferase activity"/>
    <property type="evidence" value="ECO:0007669"/>
    <property type="project" value="UniProtKB-UniRule"/>
</dbReference>
<dbReference type="GO" id="GO:0008654">
    <property type="term" value="P:phospholipid biosynthetic process"/>
    <property type="evidence" value="ECO:0007669"/>
    <property type="project" value="UniProtKB-UniRule"/>
</dbReference>
<dbReference type="HAMAP" id="MF_01043">
    <property type="entry name" value="PlsY"/>
    <property type="match status" value="1"/>
</dbReference>
<dbReference type="InterPro" id="IPR003811">
    <property type="entry name" value="G3P_acylTferase_PlsY"/>
</dbReference>
<dbReference type="NCBIfam" id="TIGR00023">
    <property type="entry name" value="glycerol-3-phosphate 1-O-acyltransferase PlsY"/>
    <property type="match status" value="1"/>
</dbReference>
<dbReference type="PANTHER" id="PTHR30309:SF0">
    <property type="entry name" value="GLYCEROL-3-PHOSPHATE ACYLTRANSFERASE-RELATED"/>
    <property type="match status" value="1"/>
</dbReference>
<dbReference type="PANTHER" id="PTHR30309">
    <property type="entry name" value="INNER MEMBRANE PROTEIN YGIH"/>
    <property type="match status" value="1"/>
</dbReference>
<dbReference type="Pfam" id="PF02660">
    <property type="entry name" value="G3P_acyltransf"/>
    <property type="match status" value="1"/>
</dbReference>
<dbReference type="SMART" id="SM01207">
    <property type="entry name" value="G3P_acyltransf"/>
    <property type="match status" value="1"/>
</dbReference>
<reference key="1">
    <citation type="submission" date="2007-03" db="EMBL/GenBank/DDBJ databases">
        <title>Complete sequence of Prosthecochloris vibrioformis DSM 265.</title>
        <authorList>
            <consortium name="US DOE Joint Genome Institute"/>
            <person name="Copeland A."/>
            <person name="Lucas S."/>
            <person name="Lapidus A."/>
            <person name="Barry K."/>
            <person name="Detter J.C."/>
            <person name="Glavina del Rio T."/>
            <person name="Hammon N."/>
            <person name="Israni S."/>
            <person name="Pitluck S."/>
            <person name="Schmutz J."/>
            <person name="Larimer F."/>
            <person name="Land M."/>
            <person name="Hauser L."/>
            <person name="Mikhailova N."/>
            <person name="Li T."/>
            <person name="Overmann J."/>
            <person name="Schuster S.C."/>
            <person name="Bryant D.A."/>
            <person name="Richardson P."/>
        </authorList>
    </citation>
    <scope>NUCLEOTIDE SEQUENCE [LARGE SCALE GENOMIC DNA]</scope>
    <source>
        <strain>DSM 265 / 1930</strain>
    </source>
</reference>
<protein>
    <recommendedName>
        <fullName evidence="1">Glycerol-3-phosphate acyltransferase</fullName>
    </recommendedName>
    <alternativeName>
        <fullName evidence="1">Acyl-PO4 G3P acyltransferase</fullName>
    </alternativeName>
    <alternativeName>
        <fullName evidence="1">Acyl-phosphate--glycerol-3-phosphate acyltransferase</fullName>
    </alternativeName>
    <alternativeName>
        <fullName evidence="1">G3P acyltransferase</fullName>
        <shortName evidence="1">GPAT</shortName>
        <ecNumber evidence="1">2.3.1.275</ecNumber>
    </alternativeName>
    <alternativeName>
        <fullName evidence="1">Lysophosphatidic acid synthase</fullName>
        <shortName evidence="1">LPA synthase</shortName>
    </alternativeName>
</protein>
<keyword id="KW-0997">Cell inner membrane</keyword>
<keyword id="KW-1003">Cell membrane</keyword>
<keyword id="KW-0444">Lipid biosynthesis</keyword>
<keyword id="KW-0443">Lipid metabolism</keyword>
<keyword id="KW-0472">Membrane</keyword>
<keyword id="KW-0594">Phospholipid biosynthesis</keyword>
<keyword id="KW-1208">Phospholipid metabolism</keyword>
<keyword id="KW-0808">Transferase</keyword>
<keyword id="KW-0812">Transmembrane</keyword>
<keyword id="KW-1133">Transmembrane helix</keyword>
<proteinExistence type="inferred from homology"/>
<feature type="chain" id="PRO_1000084389" description="Glycerol-3-phosphate acyltransferase">
    <location>
        <begin position="1"/>
        <end position="235"/>
    </location>
</feature>
<feature type="transmembrane region" description="Helical" evidence="1">
    <location>
        <begin position="4"/>
        <end position="24"/>
    </location>
</feature>
<feature type="transmembrane region" description="Helical" evidence="1">
    <location>
        <begin position="56"/>
        <end position="76"/>
    </location>
</feature>
<feature type="transmembrane region" description="Helical" evidence="1">
    <location>
        <begin position="94"/>
        <end position="114"/>
    </location>
</feature>
<feature type="transmembrane region" description="Helical" evidence="1">
    <location>
        <begin position="126"/>
        <end position="146"/>
    </location>
</feature>
<feature type="transmembrane region" description="Helical" evidence="1">
    <location>
        <begin position="152"/>
        <end position="172"/>
    </location>
</feature>
<feature type="transmembrane region" description="Helical" evidence="1">
    <location>
        <begin position="194"/>
        <end position="214"/>
    </location>
</feature>
<evidence type="ECO:0000255" key="1">
    <source>
        <dbReference type="HAMAP-Rule" id="MF_01043"/>
    </source>
</evidence>
<organism>
    <name type="scientific">Chlorobium phaeovibrioides (strain DSM 265 / 1930)</name>
    <name type="common">Prosthecochloris vibrioformis (strain DSM 265)</name>
    <dbReference type="NCBI Taxonomy" id="290318"/>
    <lineage>
        <taxon>Bacteria</taxon>
        <taxon>Pseudomonadati</taxon>
        <taxon>Chlorobiota</taxon>
        <taxon>Chlorobiia</taxon>
        <taxon>Chlorobiales</taxon>
        <taxon>Chlorobiaceae</taxon>
        <taxon>Chlorobium/Pelodictyon group</taxon>
        <taxon>Chlorobium</taxon>
    </lineage>
</organism>
<comment type="function">
    <text evidence="1">Catalyzes the transfer of an acyl group from acyl-phosphate (acyl-PO(4)) to glycerol-3-phosphate (G3P) to form lysophosphatidic acid (LPA). This enzyme utilizes acyl-phosphate as fatty acyl donor, but not acyl-CoA or acyl-ACP.</text>
</comment>
<comment type="catalytic activity">
    <reaction evidence="1">
        <text>an acyl phosphate + sn-glycerol 3-phosphate = a 1-acyl-sn-glycero-3-phosphate + phosphate</text>
        <dbReference type="Rhea" id="RHEA:34075"/>
        <dbReference type="ChEBI" id="CHEBI:43474"/>
        <dbReference type="ChEBI" id="CHEBI:57597"/>
        <dbReference type="ChEBI" id="CHEBI:57970"/>
        <dbReference type="ChEBI" id="CHEBI:59918"/>
        <dbReference type="EC" id="2.3.1.275"/>
    </reaction>
</comment>
<comment type="pathway">
    <text evidence="1">Lipid metabolism; phospholipid metabolism.</text>
</comment>
<comment type="subunit">
    <text evidence="1">Probably interacts with PlsX.</text>
</comment>
<comment type="subcellular location">
    <subcellularLocation>
        <location evidence="1">Cell inner membrane</location>
        <topology evidence="1">Multi-pass membrane protein</topology>
    </subcellularLocation>
</comment>
<comment type="similarity">
    <text evidence="1">Belongs to the PlsY family.</text>
</comment>
<name>PLSY_CHLPM</name>
<gene>
    <name evidence="1" type="primary">plsY</name>
    <name type="ordered locus">Cvib_1700</name>
</gene>
<sequence length="235" mass="25347">MLTLLAILTVSYIIGSIPTSIMAGKMMKGIDIRNFGSGNAGGTNAFRVLGWKTGLTVTLIDIVKGVVAAVSVVAFFRHHPIGAFPDINEVALRLLAGMSAVIGHVFTVFAGFKGGKGVSTAAGMLIGIAPVSMLMVIGIFLLTVWFSRYVSVASIFAAVAFPLIIAIRKYVFELGGGLDYYIRLFGESFSFHDSLDYHLIIFGLLVAFAILFTHRANIRRLISGTENRVTFRKHA</sequence>